<accession>Q9HDC5</accession>
<accession>B2RTZ0</accession>
<gene>
    <name type="primary">JPH1</name>
    <name type="synonym">JP1</name>
</gene>
<feature type="chain" id="PRO_0000159844" description="Junctophilin-1">
    <location>
        <begin position="1"/>
        <end position="661"/>
    </location>
</feature>
<feature type="topological domain" description="Cytoplasmic" evidence="2">
    <location>
        <begin position="1"/>
        <end position="639"/>
    </location>
</feature>
<feature type="transmembrane region" description="Helical; Anchor for type IV membrane protein" evidence="2">
    <location>
        <begin position="640"/>
        <end position="660"/>
    </location>
</feature>
<feature type="repeat" description="MORN 1">
    <location>
        <begin position="14"/>
        <end position="36"/>
    </location>
</feature>
<feature type="repeat" description="MORN 2">
    <location>
        <begin position="38"/>
        <end position="59"/>
    </location>
</feature>
<feature type="repeat" description="MORN 3">
    <location>
        <begin position="60"/>
        <end position="82"/>
    </location>
</feature>
<feature type="repeat" description="MORN 4">
    <location>
        <begin position="106"/>
        <end position="128"/>
    </location>
</feature>
<feature type="repeat" description="MORN 5">
    <location>
        <begin position="129"/>
        <end position="151"/>
    </location>
</feature>
<feature type="repeat" description="MORN 6">
    <location>
        <begin position="281"/>
        <end position="303"/>
    </location>
</feature>
<feature type="repeat" description="MORN 7">
    <location>
        <begin position="304"/>
        <end position="326"/>
    </location>
</feature>
<feature type="region of interest" description="Disordered" evidence="3">
    <location>
        <begin position="228"/>
        <end position="247"/>
    </location>
</feature>
<feature type="region of interest" description="Disordered" evidence="3">
    <location>
        <begin position="433"/>
        <end position="631"/>
    </location>
</feature>
<feature type="compositionally biased region" description="Basic and acidic residues" evidence="3">
    <location>
        <begin position="433"/>
        <end position="454"/>
    </location>
</feature>
<feature type="compositionally biased region" description="Basic and acidic residues" evidence="3">
    <location>
        <begin position="599"/>
        <end position="613"/>
    </location>
</feature>
<feature type="modified residue" description="Phosphoserine" evidence="8">
    <location>
        <position position="157"/>
    </location>
</feature>
<feature type="modified residue" description="Phosphoserine" evidence="9 10">
    <location>
        <position position="216"/>
    </location>
</feature>
<feature type="modified residue" description="Phosphoserine" evidence="9">
    <location>
        <position position="220"/>
    </location>
</feature>
<feature type="modified residue" description="Phosphothreonine" evidence="7 8 10">
    <location>
        <position position="448"/>
    </location>
</feature>
<feature type="modified residue" description="Phosphoserine" evidence="7 8">
    <location>
        <position position="452"/>
    </location>
</feature>
<feature type="modified residue" description="Phosphothreonine" evidence="8 10">
    <location>
        <position position="461"/>
    </location>
</feature>
<feature type="modified residue" description="Phosphoserine" evidence="8 10">
    <location>
        <position position="465"/>
    </location>
</feature>
<feature type="modified residue" description="Phosphoserine" evidence="8 10">
    <location>
        <position position="469"/>
    </location>
</feature>
<feature type="modified residue" description="Phosphoserine" evidence="9">
    <location>
        <position position="475"/>
    </location>
</feature>
<feature type="sequence variant" id="VAR_090033" description="In CMYO25; likely pathogenic." evidence="5">
    <location>
        <begin position="118"/>
        <end position="661"/>
    </location>
</feature>
<feature type="sequence variant" id="VAR_053445" description="In dbSNP:rs16938829.">
    <original>T</original>
    <variation>M</variation>
    <location>
        <position position="507"/>
    </location>
</feature>
<feature type="sequence variant" id="VAR_053446" description="In dbSNP:rs16938828.">
    <original>D</original>
    <variation>H</variation>
    <location>
        <position position="624"/>
    </location>
</feature>
<feature type="strand" evidence="11">
    <location>
        <begin position="3"/>
        <end position="7"/>
    </location>
</feature>
<feature type="strand" evidence="11">
    <location>
        <begin position="13"/>
        <end position="19"/>
    </location>
</feature>
<feature type="strand" evidence="11">
    <location>
        <begin position="22"/>
        <end position="30"/>
    </location>
</feature>
<feature type="helix" evidence="11">
    <location>
        <begin position="32"/>
        <end position="34"/>
    </location>
</feature>
<feature type="strand" evidence="11">
    <location>
        <begin position="36"/>
        <end position="43"/>
    </location>
</feature>
<feature type="strand" evidence="11">
    <location>
        <begin position="46"/>
        <end position="53"/>
    </location>
</feature>
<feature type="strand" evidence="11">
    <location>
        <begin position="59"/>
        <end position="65"/>
    </location>
</feature>
<feature type="strand" evidence="11">
    <location>
        <begin position="68"/>
        <end position="77"/>
    </location>
</feature>
<feature type="strand" evidence="11">
    <location>
        <begin position="80"/>
        <end position="87"/>
    </location>
</feature>
<feature type="strand" evidence="11">
    <location>
        <begin position="90"/>
        <end position="103"/>
    </location>
</feature>
<feature type="strand" evidence="11">
    <location>
        <begin position="105"/>
        <end position="111"/>
    </location>
</feature>
<feature type="strand" evidence="11">
    <location>
        <begin position="114"/>
        <end position="122"/>
    </location>
</feature>
<feature type="strand" evidence="11">
    <location>
        <begin position="128"/>
        <end position="134"/>
    </location>
</feature>
<feature type="strand" evidence="11">
    <location>
        <begin position="137"/>
        <end position="145"/>
    </location>
</feature>
<feature type="helix" evidence="11">
    <location>
        <begin position="149"/>
        <end position="151"/>
    </location>
</feature>
<feature type="turn" evidence="11">
    <location>
        <begin position="157"/>
        <end position="159"/>
    </location>
</feature>
<feature type="strand" evidence="11">
    <location>
        <begin position="265"/>
        <end position="268"/>
    </location>
</feature>
<feature type="strand" evidence="11">
    <location>
        <begin position="279"/>
        <end position="286"/>
    </location>
</feature>
<feature type="strand" evidence="11">
    <location>
        <begin position="289"/>
        <end position="298"/>
    </location>
</feature>
<feature type="strand" evidence="11">
    <location>
        <begin position="303"/>
        <end position="309"/>
    </location>
</feature>
<feature type="strand" evidence="11">
    <location>
        <begin position="312"/>
        <end position="320"/>
    </location>
</feature>
<feature type="strand" evidence="11">
    <location>
        <begin position="326"/>
        <end position="332"/>
    </location>
</feature>
<feature type="strand" evidence="11">
    <location>
        <begin position="335"/>
        <end position="340"/>
    </location>
</feature>
<feature type="helix" evidence="11">
    <location>
        <begin position="352"/>
        <end position="412"/>
    </location>
</feature>
<feature type="helix" evidence="11">
    <location>
        <begin position="420"/>
        <end position="426"/>
    </location>
</feature>
<sequence>MTGGRFDFDDGGTYCGGWEEGKAHGHGICTGPKGQGEYSGSWSHGFEVVGGYTWPSGNTYQGYWAQGKRHGLGVETKGKWMYRGEWSHGFKGRYGVRQSLCTPARYEGTWSNGLQDGYGVETYGDGGTYQGQWAGGMRHGYGVRQSVPYGMATVIRSPLRTSLASLRSEQSNGSVLHDAAAAADSPAGTRGGFVLNFHADAELAGKKKGGLFRRGSLLGSMKLRKSESKSSISSKRSSVRSDAAMSRISSSDANSTISFGDVDCDFCPVEDHVDATTTETYMGEWKNDKRNGFGVSERSNGMKYEGEWANNKRHGYGCTVFPDGSKEEGKYKNNILVRGIRKQLIPIRHTKTREKVDRAIEGAQRAAAMARTKVEIANSRTAHARAKADAADQAALAARQECDIARAVARELSPDFYQPGPDYVKQRFQEGVDAKENPEEKVPEKPPTPKESPHFYRKGTTPPRSPEASPKHSHSPASSPKPLKKQNPSSGARLNQDKRSVADEQVTAIVNKPLMSKAPTKEAGAVVPQSKYSGRHHIPNPSNGELHSQYHGYYVKLNAPQHPPVDVEDGDGSSQSSSALVHKPSANKWSPSKSVTKPVAKESKAEPKAKKSELAIPKNPASNDSCPALEKEANSGPNSIMIVLVMLLNIGLAILFVHFLT</sequence>
<evidence type="ECO:0000250" key="1"/>
<evidence type="ECO:0000255" key="2"/>
<evidence type="ECO:0000256" key="3">
    <source>
        <dbReference type="SAM" id="MobiDB-lite"/>
    </source>
</evidence>
<evidence type="ECO:0000269" key="4">
    <source>
    </source>
</evidence>
<evidence type="ECO:0000269" key="5">
    <source>
    </source>
</evidence>
<evidence type="ECO:0000305" key="6"/>
<evidence type="ECO:0007744" key="7">
    <source>
    </source>
</evidence>
<evidence type="ECO:0007744" key="8">
    <source>
    </source>
</evidence>
<evidence type="ECO:0007744" key="9">
    <source>
    </source>
</evidence>
<evidence type="ECO:0007744" key="10">
    <source>
    </source>
</evidence>
<evidence type="ECO:0007829" key="11">
    <source>
        <dbReference type="PDB" id="7RW4"/>
    </source>
</evidence>
<name>JPH1_HUMAN</name>
<keyword id="KW-0002">3D-structure</keyword>
<keyword id="KW-1003">Cell membrane</keyword>
<keyword id="KW-0225">Disease variant</keyword>
<keyword id="KW-0256">Endoplasmic reticulum</keyword>
<keyword id="KW-0472">Membrane</keyword>
<keyword id="KW-0597">Phosphoprotein</keyword>
<keyword id="KW-1267">Proteomics identification</keyword>
<keyword id="KW-1185">Reference proteome</keyword>
<keyword id="KW-0677">Repeat</keyword>
<keyword id="KW-0703">Sarcoplasmic reticulum</keyword>
<keyword id="KW-0812">Transmembrane</keyword>
<keyword id="KW-1133">Transmembrane helix</keyword>
<organism>
    <name type="scientific">Homo sapiens</name>
    <name type="common">Human</name>
    <dbReference type="NCBI Taxonomy" id="9606"/>
    <lineage>
        <taxon>Eukaryota</taxon>
        <taxon>Metazoa</taxon>
        <taxon>Chordata</taxon>
        <taxon>Craniata</taxon>
        <taxon>Vertebrata</taxon>
        <taxon>Euteleostomi</taxon>
        <taxon>Mammalia</taxon>
        <taxon>Eutheria</taxon>
        <taxon>Euarchontoglires</taxon>
        <taxon>Primates</taxon>
        <taxon>Haplorrhini</taxon>
        <taxon>Catarrhini</taxon>
        <taxon>Hominidae</taxon>
        <taxon>Homo</taxon>
    </lineage>
</organism>
<reference key="1">
    <citation type="journal article" date="2006" name="Nature">
        <title>DNA sequence and analysis of human chromosome 8.</title>
        <authorList>
            <person name="Nusbaum C."/>
            <person name="Mikkelsen T.S."/>
            <person name="Zody M.C."/>
            <person name="Asakawa S."/>
            <person name="Taudien S."/>
            <person name="Garber M."/>
            <person name="Kodira C.D."/>
            <person name="Schueler M.G."/>
            <person name="Shimizu A."/>
            <person name="Whittaker C.A."/>
            <person name="Chang J.L."/>
            <person name="Cuomo C.A."/>
            <person name="Dewar K."/>
            <person name="FitzGerald M.G."/>
            <person name="Yang X."/>
            <person name="Allen N.R."/>
            <person name="Anderson S."/>
            <person name="Asakawa T."/>
            <person name="Blechschmidt K."/>
            <person name="Bloom T."/>
            <person name="Borowsky M.L."/>
            <person name="Butler J."/>
            <person name="Cook A."/>
            <person name="Corum B."/>
            <person name="DeArellano K."/>
            <person name="DeCaprio D."/>
            <person name="Dooley K.T."/>
            <person name="Dorris L. III"/>
            <person name="Engels R."/>
            <person name="Gloeckner G."/>
            <person name="Hafez N."/>
            <person name="Hagopian D.S."/>
            <person name="Hall J.L."/>
            <person name="Ishikawa S.K."/>
            <person name="Jaffe D.B."/>
            <person name="Kamat A."/>
            <person name="Kudoh J."/>
            <person name="Lehmann R."/>
            <person name="Lokitsang T."/>
            <person name="Macdonald P."/>
            <person name="Major J.E."/>
            <person name="Matthews C.D."/>
            <person name="Mauceli E."/>
            <person name="Menzel U."/>
            <person name="Mihalev A.H."/>
            <person name="Minoshima S."/>
            <person name="Murayama Y."/>
            <person name="Naylor J.W."/>
            <person name="Nicol R."/>
            <person name="Nguyen C."/>
            <person name="O'Leary S.B."/>
            <person name="O'Neill K."/>
            <person name="Parker S.C.J."/>
            <person name="Polley A."/>
            <person name="Raymond C.K."/>
            <person name="Reichwald K."/>
            <person name="Rodriguez J."/>
            <person name="Sasaki T."/>
            <person name="Schilhabel M."/>
            <person name="Siddiqui R."/>
            <person name="Smith C.L."/>
            <person name="Sneddon T.P."/>
            <person name="Talamas J.A."/>
            <person name="Tenzin P."/>
            <person name="Topham K."/>
            <person name="Venkataraman V."/>
            <person name="Wen G."/>
            <person name="Yamazaki S."/>
            <person name="Young S.K."/>
            <person name="Zeng Q."/>
            <person name="Zimmer A.R."/>
            <person name="Rosenthal A."/>
            <person name="Birren B.W."/>
            <person name="Platzer M."/>
            <person name="Shimizu N."/>
            <person name="Lander E.S."/>
        </authorList>
    </citation>
    <scope>NUCLEOTIDE SEQUENCE [LARGE SCALE GENOMIC DNA]</scope>
</reference>
<reference key="2">
    <citation type="submission" date="2005-07" db="EMBL/GenBank/DDBJ databases">
        <authorList>
            <person name="Mural R.J."/>
            <person name="Istrail S."/>
            <person name="Sutton G.G."/>
            <person name="Florea L."/>
            <person name="Halpern A.L."/>
            <person name="Mobarry C.M."/>
            <person name="Lippert R."/>
            <person name="Walenz B."/>
            <person name="Shatkay H."/>
            <person name="Dew I."/>
            <person name="Miller J.R."/>
            <person name="Flanigan M.J."/>
            <person name="Edwards N.J."/>
            <person name="Bolanos R."/>
            <person name="Fasulo D."/>
            <person name="Halldorsson B.V."/>
            <person name="Hannenhalli S."/>
            <person name="Turner R."/>
            <person name="Yooseph S."/>
            <person name="Lu F."/>
            <person name="Nusskern D.R."/>
            <person name="Shue B.C."/>
            <person name="Zheng X.H."/>
            <person name="Zhong F."/>
            <person name="Delcher A.L."/>
            <person name="Huson D.H."/>
            <person name="Kravitz S.A."/>
            <person name="Mouchard L."/>
            <person name="Reinert K."/>
            <person name="Remington K.A."/>
            <person name="Clark A.G."/>
            <person name="Waterman M.S."/>
            <person name="Eichler E.E."/>
            <person name="Adams M.D."/>
            <person name="Hunkapiller M.W."/>
            <person name="Myers E.W."/>
            <person name="Venter J.C."/>
        </authorList>
    </citation>
    <scope>NUCLEOTIDE SEQUENCE [LARGE SCALE GENOMIC DNA]</scope>
</reference>
<reference key="3">
    <citation type="journal article" date="2004" name="Genome Res.">
        <title>The status, quality, and expansion of the NIH full-length cDNA project: the Mammalian Gene Collection (MGC).</title>
        <authorList>
            <consortium name="The MGC Project Team"/>
        </authorList>
    </citation>
    <scope>NUCLEOTIDE SEQUENCE [LARGE SCALE MRNA]</scope>
</reference>
<reference key="4">
    <citation type="journal article" date="2000" name="Biochem. Biophys. Res. Commun.">
        <title>Characterization of human junctophilin subtype genes.</title>
        <authorList>
            <person name="Nishi M."/>
            <person name="Mizushima A."/>
            <person name="Nakagawara K."/>
            <person name="Takeshima H."/>
        </authorList>
    </citation>
    <scope>NUCLEOTIDE SEQUENCE [GENOMIC DNA] OF 421-661</scope>
    <scope>TISSUE SPECIFICITY</scope>
</reference>
<reference key="5">
    <citation type="journal article" date="2006" name="Cell">
        <title>Global, in vivo, and site-specific phosphorylation dynamics in signaling networks.</title>
        <authorList>
            <person name="Olsen J.V."/>
            <person name="Blagoev B."/>
            <person name="Gnad F."/>
            <person name="Macek B."/>
            <person name="Kumar C."/>
            <person name="Mortensen P."/>
            <person name="Mann M."/>
        </authorList>
    </citation>
    <scope>PHOSPHORYLATION [LARGE SCALE ANALYSIS] AT THR-448 AND SER-452</scope>
    <scope>IDENTIFICATION BY MASS SPECTROMETRY [LARGE SCALE ANALYSIS]</scope>
    <source>
        <tissue>Cervix carcinoma</tissue>
    </source>
</reference>
<reference key="6">
    <citation type="journal article" date="2008" name="Proc. Natl. Acad. Sci. U.S.A.">
        <title>A quantitative atlas of mitotic phosphorylation.</title>
        <authorList>
            <person name="Dephoure N."/>
            <person name="Zhou C."/>
            <person name="Villen J."/>
            <person name="Beausoleil S.A."/>
            <person name="Bakalarski C.E."/>
            <person name="Elledge S.J."/>
            <person name="Gygi S.P."/>
        </authorList>
    </citation>
    <scope>PHOSPHORYLATION [LARGE SCALE ANALYSIS] AT SER-157; THR-448; SER-452; THR-461; SER-465 AND SER-469</scope>
    <scope>IDENTIFICATION BY MASS SPECTROMETRY [LARGE SCALE ANALYSIS]</scope>
    <source>
        <tissue>Cervix carcinoma</tissue>
    </source>
</reference>
<reference key="7">
    <citation type="journal article" date="2011" name="BMC Syst. Biol.">
        <title>Initial characterization of the human central proteome.</title>
        <authorList>
            <person name="Burkard T.R."/>
            <person name="Planyavsky M."/>
            <person name="Kaupe I."/>
            <person name="Breitwieser F.P."/>
            <person name="Buerckstuemmer T."/>
            <person name="Bennett K.L."/>
            <person name="Superti-Furga G."/>
            <person name="Colinge J."/>
        </authorList>
    </citation>
    <scope>IDENTIFICATION BY MASS SPECTROMETRY [LARGE SCALE ANALYSIS]</scope>
</reference>
<reference key="8">
    <citation type="journal article" date="2011" name="Sci. Signal.">
        <title>System-wide temporal characterization of the proteome and phosphoproteome of human embryonic stem cell differentiation.</title>
        <authorList>
            <person name="Rigbolt K.T."/>
            <person name="Prokhorova T.A."/>
            <person name="Akimov V."/>
            <person name="Henningsen J."/>
            <person name="Johansen P.T."/>
            <person name="Kratchmarova I."/>
            <person name="Kassem M."/>
            <person name="Mann M."/>
            <person name="Olsen J.V."/>
            <person name="Blagoev B."/>
        </authorList>
    </citation>
    <scope>PHOSPHORYLATION [LARGE SCALE ANALYSIS] AT SER-216; SER-220 AND SER-475</scope>
    <scope>IDENTIFICATION BY MASS SPECTROMETRY [LARGE SCALE ANALYSIS]</scope>
</reference>
<reference key="9">
    <citation type="journal article" date="2013" name="J. Proteome Res.">
        <title>Toward a comprehensive characterization of a human cancer cell phosphoproteome.</title>
        <authorList>
            <person name="Zhou H."/>
            <person name="Di Palma S."/>
            <person name="Preisinger C."/>
            <person name="Peng M."/>
            <person name="Polat A.N."/>
            <person name="Heck A.J."/>
            <person name="Mohammed S."/>
        </authorList>
    </citation>
    <scope>PHOSPHORYLATION [LARGE SCALE ANALYSIS] AT SER-216; THR-448; THR-461; SER-465 AND SER-469</scope>
    <scope>IDENTIFICATION BY MASS SPECTROMETRY [LARGE SCALE ANALYSIS]</scope>
    <source>
        <tissue>Cervix carcinoma</tissue>
    </source>
</reference>
<reference key="10">
    <citation type="journal article" date="2024" name="J. Med. Genet.">
        <title>Loss-of-function variants in JPH1 cause congenital myopathy with prominent facial and ocular involvement.</title>
        <authorList>
            <person name="Johari M."/>
            <person name="Topf A."/>
            <person name="Folland C."/>
            <person name="Duff J."/>
            <person name="Dofash L."/>
            <person name="Marti P."/>
            <person name="Robertson T."/>
            <person name="Vilchez J."/>
            <person name="Cairns A."/>
            <person name="Harris E."/>
            <person name="Marini-Bettolo C."/>
            <person name="Hundallah K."/>
            <person name="Alhashem A.M."/>
            <person name="Al-Owain M."/>
            <person name="Maroofian R."/>
            <person name="Ravenscroft G."/>
            <person name="Straub V."/>
        </authorList>
    </citation>
    <scope>INVOLVEMENT IN CMYO25</scope>
    <scope>VARIANT CMYO25 118-TYR--THR-661 DEL</scope>
</reference>
<proteinExistence type="evidence at protein level"/>
<dbReference type="EMBL" id="AF110324">
    <property type="status" value="NOT_ANNOTATED_CDS"/>
    <property type="molecule type" value="Genomic_DNA"/>
</dbReference>
<dbReference type="EMBL" id="CH471068">
    <property type="protein sequence ID" value="EAW87029.1"/>
    <property type="molecule type" value="Genomic_DNA"/>
</dbReference>
<dbReference type="EMBL" id="BC140875">
    <property type="protein sequence ID" value="AAI40876.1"/>
    <property type="molecule type" value="mRNA"/>
</dbReference>
<dbReference type="EMBL" id="BC140876">
    <property type="protein sequence ID" value="AAI40877.1"/>
    <property type="molecule type" value="mRNA"/>
</dbReference>
<dbReference type="EMBL" id="AB042635">
    <property type="protein sequence ID" value="BAB11986.1"/>
    <property type="molecule type" value="Genomic_DNA"/>
</dbReference>
<dbReference type="CCDS" id="CCDS6217.1"/>
<dbReference type="RefSeq" id="NP_001304759.1">
    <property type="nucleotide sequence ID" value="NM_001317830.2"/>
</dbReference>
<dbReference type="RefSeq" id="NP_001349979.1">
    <property type="nucleotide sequence ID" value="NM_001363050.1"/>
</dbReference>
<dbReference type="RefSeq" id="NP_001349980.1">
    <property type="nucleotide sequence ID" value="NM_001363051.1"/>
</dbReference>
<dbReference type="RefSeq" id="NP_065698.1">
    <property type="nucleotide sequence ID" value="NM_020647.4"/>
</dbReference>
<dbReference type="RefSeq" id="XP_005251331.1">
    <property type="nucleotide sequence ID" value="XM_005251274.3"/>
</dbReference>
<dbReference type="RefSeq" id="XP_005251332.1">
    <property type="nucleotide sequence ID" value="XM_005251275.4"/>
</dbReference>
<dbReference type="RefSeq" id="XP_047277952.1">
    <property type="nucleotide sequence ID" value="XM_047421996.1"/>
</dbReference>
<dbReference type="RefSeq" id="XP_054216830.1">
    <property type="nucleotide sequence ID" value="XM_054360855.1"/>
</dbReference>
<dbReference type="PDB" id="7RW4">
    <property type="method" value="X-ray"/>
    <property type="resolution" value="1.31 A"/>
    <property type="chains" value="A=1-442"/>
</dbReference>
<dbReference type="PDBsum" id="7RW4"/>
<dbReference type="SMR" id="Q9HDC5"/>
<dbReference type="BioGRID" id="121191">
    <property type="interactions" value="253"/>
</dbReference>
<dbReference type="FunCoup" id="Q9HDC5">
    <property type="interactions" value="1590"/>
</dbReference>
<dbReference type="IntAct" id="Q9HDC5">
    <property type="interactions" value="119"/>
</dbReference>
<dbReference type="MINT" id="Q9HDC5"/>
<dbReference type="STRING" id="9606.ENSP00000344488"/>
<dbReference type="TCDB" id="8.A.110.1.1">
    <property type="family name" value="the junctophilin (jp) family"/>
</dbReference>
<dbReference type="CarbonylDB" id="Q9HDC5"/>
<dbReference type="GlyGen" id="Q9HDC5">
    <property type="glycosylation" value="1 site, 1 O-linked glycan (1 site)"/>
</dbReference>
<dbReference type="iPTMnet" id="Q9HDC5"/>
<dbReference type="PhosphoSitePlus" id="Q9HDC5"/>
<dbReference type="BioMuta" id="JPH1"/>
<dbReference type="DMDM" id="27805492"/>
<dbReference type="jPOST" id="Q9HDC5"/>
<dbReference type="MassIVE" id="Q9HDC5"/>
<dbReference type="PaxDb" id="9606-ENSP00000344488"/>
<dbReference type="PeptideAtlas" id="Q9HDC5"/>
<dbReference type="ProteomicsDB" id="81850"/>
<dbReference type="Pumba" id="Q9HDC5"/>
<dbReference type="Antibodypedia" id="2291">
    <property type="antibodies" value="153 antibodies from 28 providers"/>
</dbReference>
<dbReference type="DNASU" id="56704"/>
<dbReference type="Ensembl" id="ENST00000342232.5">
    <property type="protein sequence ID" value="ENSP00000344488.4"/>
    <property type="gene ID" value="ENSG00000104369.5"/>
</dbReference>
<dbReference type="GeneID" id="56704"/>
<dbReference type="KEGG" id="hsa:56704"/>
<dbReference type="MANE-Select" id="ENST00000342232.5">
    <property type="protein sequence ID" value="ENSP00000344488.4"/>
    <property type="RefSeq nucleotide sequence ID" value="NM_020647.4"/>
    <property type="RefSeq protein sequence ID" value="NP_065698.1"/>
</dbReference>
<dbReference type="UCSC" id="uc003yae.4">
    <property type="organism name" value="human"/>
</dbReference>
<dbReference type="AGR" id="HGNC:14201"/>
<dbReference type="CTD" id="56704"/>
<dbReference type="DisGeNET" id="56704"/>
<dbReference type="GeneCards" id="JPH1"/>
<dbReference type="HGNC" id="HGNC:14201">
    <property type="gene designation" value="JPH1"/>
</dbReference>
<dbReference type="HPA" id="ENSG00000104369">
    <property type="expression patterns" value="Group enriched (skeletal muscle, tongue)"/>
</dbReference>
<dbReference type="MalaCards" id="JPH1"/>
<dbReference type="MIM" id="605266">
    <property type="type" value="gene"/>
</dbReference>
<dbReference type="MIM" id="620964">
    <property type="type" value="phenotype"/>
</dbReference>
<dbReference type="neXtProt" id="NX_Q9HDC5"/>
<dbReference type="OpenTargets" id="ENSG00000104369"/>
<dbReference type="PharmGKB" id="PA29998"/>
<dbReference type="VEuPathDB" id="HostDB:ENSG00000104369"/>
<dbReference type="eggNOG" id="KOG0231">
    <property type="taxonomic scope" value="Eukaryota"/>
</dbReference>
<dbReference type="GeneTree" id="ENSGT00940000156130"/>
<dbReference type="HOGENOM" id="CLU_008078_1_0_1"/>
<dbReference type="InParanoid" id="Q9HDC5"/>
<dbReference type="OMA" id="FSAQHNA"/>
<dbReference type="OrthoDB" id="284854at2759"/>
<dbReference type="PAN-GO" id="Q9HDC5">
    <property type="GO annotations" value="4 GO annotations based on evolutionary models"/>
</dbReference>
<dbReference type="PhylomeDB" id="Q9HDC5"/>
<dbReference type="TreeFam" id="TF317210"/>
<dbReference type="PathwayCommons" id="Q9HDC5"/>
<dbReference type="SignaLink" id="Q9HDC5"/>
<dbReference type="BioGRID-ORCS" id="56704">
    <property type="hits" value="22 hits in 1156 CRISPR screens"/>
</dbReference>
<dbReference type="ChiTaRS" id="JPH1">
    <property type="organism name" value="human"/>
</dbReference>
<dbReference type="GeneWiki" id="JPH1"/>
<dbReference type="GenomeRNAi" id="56704"/>
<dbReference type="Pharos" id="Q9HDC5">
    <property type="development level" value="Tbio"/>
</dbReference>
<dbReference type="PRO" id="PR:Q9HDC5"/>
<dbReference type="Proteomes" id="UP000005640">
    <property type="component" value="Chromosome 8"/>
</dbReference>
<dbReference type="RNAct" id="Q9HDC5">
    <property type="molecule type" value="protein"/>
</dbReference>
<dbReference type="Bgee" id="ENSG00000104369">
    <property type="expression patterns" value="Expressed in quadriceps femoris and 145 other cell types or tissues"/>
</dbReference>
<dbReference type="ExpressionAtlas" id="Q9HDC5">
    <property type="expression patterns" value="baseline and differential"/>
</dbReference>
<dbReference type="GO" id="GO:0005789">
    <property type="term" value="C:endoplasmic reticulum membrane"/>
    <property type="evidence" value="ECO:0000318"/>
    <property type="project" value="GO_Central"/>
</dbReference>
<dbReference type="GO" id="GO:0030314">
    <property type="term" value="C:junctional membrane complex"/>
    <property type="evidence" value="ECO:0000318"/>
    <property type="project" value="GO_Central"/>
</dbReference>
<dbReference type="GO" id="GO:0014701">
    <property type="term" value="C:junctional sarcoplasmic reticulum membrane"/>
    <property type="evidence" value="ECO:0000304"/>
    <property type="project" value="BHF-UCL"/>
</dbReference>
<dbReference type="GO" id="GO:0005654">
    <property type="term" value="C:nucleoplasm"/>
    <property type="evidence" value="ECO:0000314"/>
    <property type="project" value="HPA"/>
</dbReference>
<dbReference type="GO" id="GO:0005886">
    <property type="term" value="C:plasma membrane"/>
    <property type="evidence" value="ECO:0000318"/>
    <property type="project" value="GO_Central"/>
</dbReference>
<dbReference type="GO" id="GO:0016529">
    <property type="term" value="C:sarcoplasmic reticulum"/>
    <property type="evidence" value="ECO:0000318"/>
    <property type="project" value="GO_Central"/>
</dbReference>
<dbReference type="GO" id="GO:0030018">
    <property type="term" value="C:Z disc"/>
    <property type="evidence" value="ECO:0007669"/>
    <property type="project" value="Ensembl"/>
</dbReference>
<dbReference type="GO" id="GO:0008307">
    <property type="term" value="F:structural constituent of muscle"/>
    <property type="evidence" value="ECO:0007669"/>
    <property type="project" value="Ensembl"/>
</dbReference>
<dbReference type="GO" id="GO:0060402">
    <property type="term" value="P:calcium ion transport into cytosol"/>
    <property type="evidence" value="ECO:0000304"/>
    <property type="project" value="BHF-UCL"/>
</dbReference>
<dbReference type="GO" id="GO:0007517">
    <property type="term" value="P:muscle organ development"/>
    <property type="evidence" value="ECO:0007669"/>
    <property type="project" value="Ensembl"/>
</dbReference>
<dbReference type="GO" id="GO:0010882">
    <property type="term" value="P:regulation of cardiac muscle contraction by calcium ion signaling"/>
    <property type="evidence" value="ECO:0000304"/>
    <property type="project" value="BHF-UCL"/>
</dbReference>
<dbReference type="GO" id="GO:0010880">
    <property type="term" value="P:regulation of release of sequestered calcium ion into cytosol by sarcoplasmic reticulum"/>
    <property type="evidence" value="ECO:0000304"/>
    <property type="project" value="BHF-UCL"/>
</dbReference>
<dbReference type="FunFam" id="2.20.110.10:FF:000001">
    <property type="entry name" value="Junctophilin"/>
    <property type="match status" value="1"/>
</dbReference>
<dbReference type="FunFam" id="2.20.110.10:FF:000003">
    <property type="entry name" value="Junctophilin"/>
    <property type="match status" value="1"/>
</dbReference>
<dbReference type="FunFam" id="2.20.110.10:FF:000012">
    <property type="entry name" value="Junctophilin"/>
    <property type="match status" value="1"/>
</dbReference>
<dbReference type="Gene3D" id="2.20.110.10">
    <property type="entry name" value="Histone H3 K4-specific methyltransferase SET7/9 N-terminal domain"/>
    <property type="match status" value="3"/>
</dbReference>
<dbReference type="InterPro" id="IPR017191">
    <property type="entry name" value="Junctophilin"/>
</dbReference>
<dbReference type="InterPro" id="IPR003409">
    <property type="entry name" value="MORN"/>
</dbReference>
<dbReference type="PANTHER" id="PTHR23085">
    <property type="entry name" value="GH28348P"/>
    <property type="match status" value="1"/>
</dbReference>
<dbReference type="PANTHER" id="PTHR23085:SF6">
    <property type="entry name" value="JUNCTOPHILIN-1"/>
    <property type="match status" value="1"/>
</dbReference>
<dbReference type="Pfam" id="PF02493">
    <property type="entry name" value="MORN"/>
    <property type="match status" value="8"/>
</dbReference>
<dbReference type="PIRSF" id="PIRSF037387">
    <property type="entry name" value="Junctophilin"/>
    <property type="match status" value="1"/>
</dbReference>
<dbReference type="SMART" id="SM00698">
    <property type="entry name" value="MORN"/>
    <property type="match status" value="6"/>
</dbReference>
<dbReference type="SUPFAM" id="SSF82185">
    <property type="entry name" value="Histone H3 K4-specific methyltransferase SET7/9 N-terminal domain"/>
    <property type="match status" value="2"/>
</dbReference>
<comment type="function">
    <text>Junctophilins contribute to the formation of junctional membrane complexes (JMCs) which link the plasma membrane with the endoplasmic or sarcoplasmic reticulum in excitable cells. Provides a structural foundation for functional cross-talk between the cell surface and intracellular calcium release channels. JPH1 contributes to the construction of the skeletal muscle triad by linking the t-tubule (transverse-tubule) and SR (sarcoplasmic reticulum) membranes.</text>
</comment>
<comment type="interaction">
    <interactant intactId="EBI-465137">
        <id>Q9HDC5</id>
    </interactant>
    <interactant intactId="EBI-13059134">
        <id>Q13520</id>
        <label>AQP6</label>
    </interactant>
    <organismsDiffer>false</organismsDiffer>
    <experiments>3</experiments>
</comment>
<comment type="interaction">
    <interactant intactId="EBI-465137">
        <id>Q9HDC5</id>
    </interactant>
    <interactant intactId="EBI-10215665">
        <id>P56851</id>
        <label>EDDM3B</label>
    </interactant>
    <organismsDiffer>false</organismsDiffer>
    <experiments>3</experiments>
</comment>
<comment type="interaction">
    <interactant intactId="EBI-465137">
        <id>Q9HDC5</id>
    </interactant>
    <interactant intactId="EBI-4319440">
        <id>P54849</id>
        <label>EMP1</label>
    </interactant>
    <organismsDiffer>false</organismsDiffer>
    <experiments>3</experiments>
</comment>
<comment type="interaction">
    <interactant intactId="EBI-465137">
        <id>Q9HDC5</id>
    </interactant>
    <interactant intactId="EBI-18076404">
        <id>O15529</id>
        <label>GPR42</label>
    </interactant>
    <organismsDiffer>false</organismsDiffer>
    <experiments>3</experiments>
</comment>
<comment type="interaction">
    <interactant intactId="EBI-465137">
        <id>Q9HDC5</id>
    </interactant>
    <interactant intactId="EBI-12937691">
        <id>Q9BUP3-3</id>
        <label>HTATIP2</label>
    </interactant>
    <organismsDiffer>false</organismsDiffer>
    <experiments>3</experiments>
</comment>
<comment type="interaction">
    <interactant intactId="EBI-465137">
        <id>Q9HDC5</id>
    </interactant>
    <interactant intactId="EBI-750776">
        <id>O95214</id>
        <label>LEPROTL1</label>
    </interactant>
    <organismsDiffer>false</organismsDiffer>
    <experiments>3</experiments>
</comment>
<comment type="interaction">
    <interactant intactId="EBI-465137">
        <id>Q9HDC5</id>
    </interactant>
    <interactant intactId="EBI-16439278">
        <id>Q6FHY5</id>
        <label>MEOX2</label>
    </interactant>
    <organismsDiffer>false</organismsDiffer>
    <experiments>3</experiments>
</comment>
<comment type="interaction">
    <interactant intactId="EBI-465137">
        <id>Q9HDC5</id>
    </interactant>
    <interactant intactId="EBI-2863634">
        <id>Q9UHE5</id>
        <label>NAT8</label>
    </interactant>
    <organismsDiffer>false</organismsDiffer>
    <experiments>3</experiments>
</comment>
<comment type="interaction">
    <interactant intactId="EBI-465137">
        <id>Q9HDC5</id>
    </interactant>
    <interactant intactId="EBI-12188331">
        <id>P60201-2</id>
        <label>PLP1</label>
    </interactant>
    <organismsDiffer>false</organismsDiffer>
    <experiments>3</experiments>
</comment>
<comment type="interaction">
    <interactant intactId="EBI-465137">
        <id>Q9HDC5</id>
    </interactant>
    <interactant intactId="EBI-12243266">
        <id>Q7RTY0</id>
        <label>SLC16A13</label>
    </interactant>
    <organismsDiffer>false</organismsDiffer>
    <experiments>3</experiments>
</comment>
<comment type="interaction">
    <interactant intactId="EBI-465137">
        <id>Q9HDC5</id>
    </interactant>
    <interactant intactId="EBI-12200293">
        <id>P0DN84</id>
        <label>STRIT1</label>
    </interactant>
    <organismsDiffer>false</organismsDiffer>
    <experiments>3</experiments>
</comment>
<comment type="interaction">
    <interactant intactId="EBI-465137">
        <id>Q9HDC5</id>
    </interactant>
    <interactant intactId="EBI-10171534">
        <id>A0PK00</id>
        <label>TMEM120B</label>
    </interactant>
    <organismsDiffer>false</organismsDiffer>
    <experiments>3</experiments>
</comment>
<comment type="interaction">
    <interactant intactId="EBI-465137">
        <id>Q9HDC5</id>
    </interactant>
    <interactant intactId="EBI-6656213">
        <id>Q6PI78</id>
        <label>TMEM65</label>
    </interactant>
    <organismsDiffer>false</organismsDiffer>
    <experiments>3</experiments>
</comment>
<comment type="subcellular location">
    <subcellularLocation>
        <location evidence="1">Cell membrane</location>
        <topology evidence="1">Peripheral membrane protein</topology>
    </subcellularLocation>
    <subcellularLocation>
        <location evidence="1">Endoplasmic reticulum membrane</location>
        <topology evidence="1">Single-pass type IV membrane protein</topology>
    </subcellularLocation>
    <subcellularLocation>
        <location evidence="1">Sarcoplasmic reticulum membrane</location>
        <topology evidence="1">Single-pass type IV membrane protein</topology>
    </subcellularLocation>
    <text evidence="1">Localized predominantly on the plasma membrane. The transmembrane domain is anchored in endoplasmic/sarcoplasmic reticulum membrane, while the N-terminal part associates with the plasma membrane. In skeletal muscle cells, it is predominantly localized at the junction of the A and I bands (By similarity).</text>
</comment>
<comment type="tissue specificity">
    <text evidence="4">Abundantly expressed in skeletal muscle. Very low levels in heart.</text>
</comment>
<comment type="domain">
    <text evidence="1">The MORN (membrane occupation and recognition nexus) repeats contribute to the plasma membrane binding, possibly by interacting with phospholipids.</text>
</comment>
<comment type="disease" evidence="5">
    <disease id="DI-06948">
        <name>Congenital myopathy 25</name>
        <acronym>CMYO25</acronym>
        <description>A form of congenital myopathy, a clinically and genetically heterogeneous group of muscle disorders characterized by hypotonia and muscle weakness apparent at birth, and specific pathological features on muscle biopsy. CMYO25 is an autosomal recessive form characterized by prominent facial, ocular, and bulbar features.</description>
        <dbReference type="MIM" id="620964"/>
    </disease>
    <text>The disease is caused by variants affecting the gene represented in this entry.</text>
</comment>
<comment type="similarity">
    <text evidence="6">Belongs to the junctophilin family.</text>
</comment>
<protein>
    <recommendedName>
        <fullName>Junctophilin-1</fullName>
        <shortName>JP-1</shortName>
    </recommendedName>
    <alternativeName>
        <fullName>Junctophilin type 1</fullName>
    </alternativeName>
</protein>